<gene>
    <name type="primary">rpsS</name>
</gene>
<keyword id="KW-0687">Ribonucleoprotein</keyword>
<keyword id="KW-0689">Ribosomal protein</keyword>
<keyword id="KW-0694">RNA-binding</keyword>
<keyword id="KW-0699">rRNA-binding</keyword>
<sequence length="25" mass="2951">GHKLGEFAPTRTFRGHKKEDKKVKR</sequence>
<proteinExistence type="inferred from homology"/>
<name>RS19_ACHLA</name>
<protein>
    <recommendedName>
        <fullName evidence="3">Small ribosomal subunit protein uS19</fullName>
    </recommendedName>
    <alternativeName>
        <fullName>30S ribosomal protein S19</fullName>
    </alternativeName>
</protein>
<dbReference type="EMBL" id="M74771">
    <property type="protein sequence ID" value="AAA21911.1"/>
    <property type="molecule type" value="Genomic_DNA"/>
</dbReference>
<dbReference type="PIR" id="E41839">
    <property type="entry name" value="E41839"/>
</dbReference>
<dbReference type="GO" id="GO:1990904">
    <property type="term" value="C:ribonucleoprotein complex"/>
    <property type="evidence" value="ECO:0007669"/>
    <property type="project" value="UniProtKB-KW"/>
</dbReference>
<dbReference type="GO" id="GO:0005840">
    <property type="term" value="C:ribosome"/>
    <property type="evidence" value="ECO:0007669"/>
    <property type="project" value="UniProtKB-KW"/>
</dbReference>
<dbReference type="GO" id="GO:0019843">
    <property type="term" value="F:rRNA binding"/>
    <property type="evidence" value="ECO:0007669"/>
    <property type="project" value="UniProtKB-KW"/>
</dbReference>
<dbReference type="GO" id="GO:0003735">
    <property type="term" value="F:structural constituent of ribosome"/>
    <property type="evidence" value="ECO:0007669"/>
    <property type="project" value="InterPro"/>
</dbReference>
<dbReference type="GO" id="GO:0006412">
    <property type="term" value="P:translation"/>
    <property type="evidence" value="ECO:0007669"/>
    <property type="project" value="InterPro"/>
</dbReference>
<dbReference type="Gene3D" id="3.30.860.10">
    <property type="entry name" value="30s Ribosomal Protein S19, Chain A"/>
    <property type="match status" value="1"/>
</dbReference>
<dbReference type="InterPro" id="IPR023575">
    <property type="entry name" value="Ribosomal_uS19_SF"/>
</dbReference>
<dbReference type="SUPFAM" id="SSF54570">
    <property type="entry name" value="Ribosomal protein S19"/>
    <property type="match status" value="1"/>
</dbReference>
<evidence type="ECO:0000250" key="1"/>
<evidence type="ECO:0000256" key="2">
    <source>
        <dbReference type="SAM" id="MobiDB-lite"/>
    </source>
</evidence>
<evidence type="ECO:0000305" key="3"/>
<comment type="function">
    <text evidence="1">Protein S19 forms a complex with S13 that binds strongly to the 16S ribosomal RNA.</text>
</comment>
<comment type="similarity">
    <text evidence="3">Belongs to the universal ribosomal protein uS19 family.</text>
</comment>
<reference key="1">
    <citation type="journal article" date="1992" name="J. Bacteriol.">
        <title>Evolutionary relationships of a plant-pathogenic mycoplasmalike organism and Acholeplasma laidlawii deduced from two ribosomal protein gene sequences.</title>
        <authorList>
            <person name="Lim P.O."/>
            <person name="Sears B.B."/>
        </authorList>
    </citation>
    <scope>NUCLEOTIDE SEQUENCE [GENOMIC DNA]</scope>
</reference>
<accession>P29224</accession>
<organism>
    <name type="scientific">Acholeplasma laidlawii</name>
    <dbReference type="NCBI Taxonomy" id="2148"/>
    <lineage>
        <taxon>Bacteria</taxon>
        <taxon>Bacillati</taxon>
        <taxon>Mycoplasmatota</taxon>
        <taxon>Mollicutes</taxon>
        <taxon>Acholeplasmatales</taxon>
        <taxon>Acholeplasmataceae</taxon>
        <taxon>Acholeplasma</taxon>
    </lineage>
</organism>
<feature type="chain" id="PRO_0000129762" description="Small ribosomal subunit protein uS19">
    <location>
        <begin position="1" status="less than"/>
        <end position="25"/>
    </location>
</feature>
<feature type="region of interest" description="Disordered" evidence="2">
    <location>
        <begin position="1"/>
        <end position="25"/>
    </location>
</feature>
<feature type="non-terminal residue">
    <location>
        <position position="1"/>
    </location>
</feature>